<keyword id="KW-1185">Reference proteome</keyword>
<feature type="chain" id="PRO_0000344622" description="Protein FAM90A14">
    <location>
        <begin position="1"/>
        <end position="464"/>
    </location>
</feature>
<feature type="region of interest" description="Disordered" evidence="1">
    <location>
        <begin position="1"/>
        <end position="42"/>
    </location>
</feature>
<feature type="region of interest" description="Disordered" evidence="1">
    <location>
        <begin position="70"/>
        <end position="389"/>
    </location>
</feature>
<feature type="region of interest" description="Disordered" evidence="1">
    <location>
        <begin position="411"/>
        <end position="437"/>
    </location>
</feature>
<feature type="compositionally biased region" description="Basic and acidic residues" evidence="1">
    <location>
        <begin position="74"/>
        <end position="89"/>
    </location>
</feature>
<feature type="compositionally biased region" description="Basic and acidic residues" evidence="1">
    <location>
        <begin position="97"/>
        <end position="114"/>
    </location>
</feature>
<feature type="compositionally biased region" description="Low complexity" evidence="1">
    <location>
        <begin position="180"/>
        <end position="197"/>
    </location>
</feature>
<comment type="similarity">
    <text evidence="2">Belongs to the FAM90 family.</text>
</comment>
<organism>
    <name type="scientific">Homo sapiens</name>
    <name type="common">Human</name>
    <dbReference type="NCBI Taxonomy" id="9606"/>
    <lineage>
        <taxon>Eukaryota</taxon>
        <taxon>Metazoa</taxon>
        <taxon>Chordata</taxon>
        <taxon>Craniata</taxon>
        <taxon>Vertebrata</taxon>
        <taxon>Euteleostomi</taxon>
        <taxon>Mammalia</taxon>
        <taxon>Eutheria</taxon>
        <taxon>Euarchontoglires</taxon>
        <taxon>Primates</taxon>
        <taxon>Haplorrhini</taxon>
        <taxon>Catarrhini</taxon>
        <taxon>Hominidae</taxon>
        <taxon>Homo</taxon>
    </lineage>
</organism>
<proteinExistence type="inferred from homology"/>
<dbReference type="EMBL" id="AC084121">
    <property type="status" value="NOT_ANNOTATED_CDS"/>
    <property type="molecule type" value="Genomic_DNA"/>
</dbReference>
<dbReference type="RefSeq" id="NP_001157924.1">
    <property type="nucleotide sequence ID" value="NM_001164452.1"/>
</dbReference>
<dbReference type="iPTMnet" id="P0C7W9"/>
<dbReference type="PhosphoSitePlus" id="P0C7W9"/>
<dbReference type="BioMuta" id="HGNC:32262"/>
<dbReference type="DMDM" id="206557854"/>
<dbReference type="MassIVE" id="P0C7W9"/>
<dbReference type="Ensembl" id="ENST00000648315.1">
    <property type="protein sequence ID" value="ENSP00000497439.1"/>
    <property type="gene ID" value="ENSG00000285814.1"/>
</dbReference>
<dbReference type="GeneID" id="645651"/>
<dbReference type="MANE-Select" id="ENST00000648315.1">
    <property type="protein sequence ID" value="ENSP00000497439.1"/>
    <property type="RefSeq nucleotide sequence ID" value="NM_001164452.1"/>
    <property type="RefSeq protein sequence ID" value="NP_001157924.1"/>
</dbReference>
<dbReference type="AGR" id="HGNC:32262"/>
<dbReference type="GeneCards" id="FAM90A14"/>
<dbReference type="HGNC" id="HGNC:32262">
    <property type="gene designation" value="FAM90A14"/>
</dbReference>
<dbReference type="HPA" id="ENSG00000285814">
    <property type="expression patterns" value="Not detected"/>
</dbReference>
<dbReference type="MIM" id="613050">
    <property type="type" value="gene"/>
</dbReference>
<dbReference type="neXtProt" id="NX_P0C7W9"/>
<dbReference type="VEuPathDB" id="HostDB:ENSG00000285814"/>
<dbReference type="GeneTree" id="ENSGT00910000144208"/>
<dbReference type="InParanoid" id="P0C7W9"/>
<dbReference type="OMA" id="PEARDCA"/>
<dbReference type="PAN-GO" id="P0C7W9">
    <property type="GO annotations" value="0 GO annotations based on evolutionary models"/>
</dbReference>
<dbReference type="PhylomeDB" id="P0C7W9"/>
<dbReference type="Pharos" id="P0C7W9">
    <property type="development level" value="Tdark"/>
</dbReference>
<dbReference type="Proteomes" id="UP000005640">
    <property type="component" value="Chromosome 8"/>
</dbReference>
<dbReference type="RNAct" id="P0C7W9">
    <property type="molecule type" value="protein"/>
</dbReference>
<dbReference type="Bgee" id="ENSG00000285814">
    <property type="expression patterns" value="Expressed in primordial germ cell in gonad and 11 other cell types or tissues"/>
</dbReference>
<dbReference type="InterPro" id="IPR039213">
    <property type="entry name" value="FAM90"/>
</dbReference>
<dbReference type="InterPro" id="IPR041670">
    <property type="entry name" value="Znf-CCHC_6"/>
</dbReference>
<dbReference type="PANTHER" id="PTHR16035:SF14">
    <property type="entry name" value="FAMILY WITH SEQUENCE SIMILARITY 90 MEMBER A11, PSEUDOGENE-RELATED"/>
    <property type="match status" value="1"/>
</dbReference>
<dbReference type="PANTHER" id="PTHR16035">
    <property type="entry name" value="PROTEIN FAM90A1"/>
    <property type="match status" value="1"/>
</dbReference>
<dbReference type="Pfam" id="PF15288">
    <property type="entry name" value="zf-CCHC_6"/>
    <property type="match status" value="1"/>
</dbReference>
<evidence type="ECO:0000256" key="1">
    <source>
        <dbReference type="SAM" id="MobiDB-lite"/>
    </source>
</evidence>
<evidence type="ECO:0000305" key="2"/>
<evidence type="ECO:0000312" key="3">
    <source>
        <dbReference type="HGNC" id="HGNC:32262"/>
    </source>
</evidence>
<protein>
    <recommendedName>
        <fullName>Protein FAM90A14</fullName>
    </recommendedName>
</protein>
<accession>P0C7W9</accession>
<sequence length="464" mass="49953">MMARRDPTSWAKRLVRAQTLQKQRRAPVGPRAPPPDEEDPRLKCKNCGAFGHTARSTRCPMKCWKAALVPATLGKKEGKENLKPWKPRVEANPGPLNKDKGEKEERPRQQDPQRKALLHMFSGKPPEKPLPNGKGSTEPSDYLRVASGPMPVHTTSKRPRLDPVLADRSATEMSGRGSVLASLSPLRKASLSSSSSLGPKERQTGAAADMPQPAVRHQGREPLLVVKPTHSRPEGDCREVPQAASKTHGLLQAARPQAQDKRPAVTSQPCPPAATHSLGLGSNLSFGPGAKRPAQAPIQACLNFPKKPRLGPFQIPESAIQGGELGAPENLQPPPAATELGPSTSPQMGRRTPAQVPSVDRQPPHSRPCLPTAQACTMSHHPAASHDGAQPLRVLFRRLENGRWSSSLLAAPSFHSPEKPGAFLAQSPHVSEKSEAPCVRVPPSVLYEDLQVSSSSEDSDSDLE</sequence>
<reference key="1">
    <citation type="journal article" date="2006" name="Nature">
        <title>DNA sequence and analysis of human chromosome 8.</title>
        <authorList>
            <person name="Nusbaum C."/>
            <person name="Mikkelsen T.S."/>
            <person name="Zody M.C."/>
            <person name="Asakawa S."/>
            <person name="Taudien S."/>
            <person name="Garber M."/>
            <person name="Kodira C.D."/>
            <person name="Schueler M.G."/>
            <person name="Shimizu A."/>
            <person name="Whittaker C.A."/>
            <person name="Chang J.L."/>
            <person name="Cuomo C.A."/>
            <person name="Dewar K."/>
            <person name="FitzGerald M.G."/>
            <person name="Yang X."/>
            <person name="Allen N.R."/>
            <person name="Anderson S."/>
            <person name="Asakawa T."/>
            <person name="Blechschmidt K."/>
            <person name="Bloom T."/>
            <person name="Borowsky M.L."/>
            <person name="Butler J."/>
            <person name="Cook A."/>
            <person name="Corum B."/>
            <person name="DeArellano K."/>
            <person name="DeCaprio D."/>
            <person name="Dooley K.T."/>
            <person name="Dorris L. III"/>
            <person name="Engels R."/>
            <person name="Gloeckner G."/>
            <person name="Hafez N."/>
            <person name="Hagopian D.S."/>
            <person name="Hall J.L."/>
            <person name="Ishikawa S.K."/>
            <person name="Jaffe D.B."/>
            <person name="Kamat A."/>
            <person name="Kudoh J."/>
            <person name="Lehmann R."/>
            <person name="Lokitsang T."/>
            <person name="Macdonald P."/>
            <person name="Major J.E."/>
            <person name="Matthews C.D."/>
            <person name="Mauceli E."/>
            <person name="Menzel U."/>
            <person name="Mihalev A.H."/>
            <person name="Minoshima S."/>
            <person name="Murayama Y."/>
            <person name="Naylor J.W."/>
            <person name="Nicol R."/>
            <person name="Nguyen C."/>
            <person name="O'Leary S.B."/>
            <person name="O'Neill K."/>
            <person name="Parker S.C.J."/>
            <person name="Polley A."/>
            <person name="Raymond C.K."/>
            <person name="Reichwald K."/>
            <person name="Rodriguez J."/>
            <person name="Sasaki T."/>
            <person name="Schilhabel M."/>
            <person name="Siddiqui R."/>
            <person name="Smith C.L."/>
            <person name="Sneddon T.P."/>
            <person name="Talamas J.A."/>
            <person name="Tenzin P."/>
            <person name="Topham K."/>
            <person name="Venkataraman V."/>
            <person name="Wen G."/>
            <person name="Yamazaki S."/>
            <person name="Young S.K."/>
            <person name="Zeng Q."/>
            <person name="Zimmer A.R."/>
            <person name="Rosenthal A."/>
            <person name="Birren B.W."/>
            <person name="Platzer M."/>
            <person name="Shimizu N."/>
            <person name="Lander E.S."/>
        </authorList>
    </citation>
    <scope>NUCLEOTIDE SEQUENCE [LARGE SCALE GENOMIC DNA]</scope>
</reference>
<gene>
    <name evidence="3" type="primary">FAM90A14</name>
    <name type="synonym">FAM90A14P</name>
</gene>
<name>F90AE_HUMAN</name>